<evidence type="ECO:0000250" key="1"/>
<evidence type="ECO:0000250" key="2">
    <source>
        <dbReference type="UniProtKB" id="P00157"/>
    </source>
</evidence>
<evidence type="ECO:0000255" key="3">
    <source>
        <dbReference type="PROSITE-ProRule" id="PRU00967"/>
    </source>
</evidence>
<evidence type="ECO:0000255" key="4">
    <source>
        <dbReference type="PROSITE-ProRule" id="PRU00968"/>
    </source>
</evidence>
<feature type="chain" id="PRO_0000061244" description="Cytochrome b">
    <location>
        <begin position="1"/>
        <end position="381"/>
    </location>
</feature>
<feature type="transmembrane region" description="Helical" evidence="2">
    <location>
        <begin position="33"/>
        <end position="53"/>
    </location>
</feature>
<feature type="transmembrane region" description="Helical" evidence="2">
    <location>
        <begin position="77"/>
        <end position="98"/>
    </location>
</feature>
<feature type="transmembrane region" description="Helical" evidence="2">
    <location>
        <begin position="113"/>
        <end position="133"/>
    </location>
</feature>
<feature type="transmembrane region" description="Helical" evidence="2">
    <location>
        <begin position="178"/>
        <end position="198"/>
    </location>
</feature>
<feature type="transmembrane region" description="Helical" evidence="2">
    <location>
        <begin position="226"/>
        <end position="246"/>
    </location>
</feature>
<feature type="transmembrane region" description="Helical" evidence="2">
    <location>
        <begin position="288"/>
        <end position="308"/>
    </location>
</feature>
<feature type="transmembrane region" description="Helical" evidence="2">
    <location>
        <begin position="320"/>
        <end position="340"/>
    </location>
</feature>
<feature type="transmembrane region" description="Helical" evidence="2">
    <location>
        <begin position="347"/>
        <end position="367"/>
    </location>
</feature>
<feature type="binding site" description="axial binding residue" evidence="2">
    <location>
        <position position="83"/>
    </location>
    <ligand>
        <name>heme b</name>
        <dbReference type="ChEBI" id="CHEBI:60344"/>
        <label>b562</label>
    </ligand>
    <ligandPart>
        <name>Fe</name>
        <dbReference type="ChEBI" id="CHEBI:18248"/>
    </ligandPart>
</feature>
<feature type="binding site" description="axial binding residue" evidence="2">
    <location>
        <position position="97"/>
    </location>
    <ligand>
        <name>heme b</name>
        <dbReference type="ChEBI" id="CHEBI:60344"/>
        <label>b566</label>
    </ligand>
    <ligandPart>
        <name>Fe</name>
        <dbReference type="ChEBI" id="CHEBI:18248"/>
    </ligandPart>
</feature>
<feature type="binding site" description="axial binding residue" evidence="2">
    <location>
        <position position="182"/>
    </location>
    <ligand>
        <name>heme b</name>
        <dbReference type="ChEBI" id="CHEBI:60344"/>
        <label>b562</label>
    </ligand>
    <ligandPart>
        <name>Fe</name>
        <dbReference type="ChEBI" id="CHEBI:18248"/>
    </ligandPart>
</feature>
<feature type="binding site" description="axial binding residue" evidence="2">
    <location>
        <position position="196"/>
    </location>
    <ligand>
        <name>heme b</name>
        <dbReference type="ChEBI" id="CHEBI:60344"/>
        <label>b566</label>
    </ligand>
    <ligandPart>
        <name>Fe</name>
        <dbReference type="ChEBI" id="CHEBI:18248"/>
    </ligandPart>
</feature>
<feature type="binding site" evidence="2">
    <location>
        <position position="201"/>
    </location>
    <ligand>
        <name>a ubiquinone</name>
        <dbReference type="ChEBI" id="CHEBI:16389"/>
    </ligand>
</feature>
<organism>
    <name type="scientific">Myoictis melas</name>
    <name type="common">Three-striped dasyure</name>
    <name type="synonym">Three-striped marsupial mouse</name>
    <dbReference type="NCBI Taxonomy" id="32549"/>
    <lineage>
        <taxon>Eukaryota</taxon>
        <taxon>Metazoa</taxon>
        <taxon>Chordata</taxon>
        <taxon>Craniata</taxon>
        <taxon>Vertebrata</taxon>
        <taxon>Euteleostomi</taxon>
        <taxon>Mammalia</taxon>
        <taxon>Metatheria</taxon>
        <taxon>Dasyuromorphia</taxon>
        <taxon>Dasyuridae</taxon>
        <taxon>Myoictis</taxon>
    </lineage>
</organism>
<name>CYB_MYOME</name>
<protein>
    <recommendedName>
        <fullName>Cytochrome b</fullName>
    </recommendedName>
    <alternativeName>
        <fullName>Complex III subunit 3</fullName>
    </alternativeName>
    <alternativeName>
        <fullName>Complex III subunit III</fullName>
    </alternativeName>
    <alternativeName>
        <fullName>Cytochrome b-c1 complex subunit 3</fullName>
    </alternativeName>
    <alternativeName>
        <fullName>Ubiquinol-cytochrome-c reductase complex cytochrome b subunit</fullName>
    </alternativeName>
</protein>
<sequence length="381" mass="42906">MINLRKTHPLLKIINHAFIDLPTPSNISAWWNFGSLLGMCLMIQILTGLFLAMHYTSDTMTAFSSVAHICRDVNYGWLLRNLHANGASMFFMCLFLHVGRGIYYGSYLYKETWNIGVILLLTVMATAFVGYVLPWGQMSFWGATVITNLLSAIPYIGSTLAEWIWGGFAVDKATLTRFFAFHFILPFIITALAMVHLLFLHETGSNNPTGINPNADKIPFHPYYTIKDALGLTFLFLVLLLLALFSPDMLGDPDNFSPANPLNTPPHIKPEWYFLFAYAILRSIPNKLGGVLALLASIMILLILPLLHTANQRSMMFRPISQTLFWILTADLITLTWIGGQPVEQPFIIIGQLASMLYLLLILVLMPLAGLLENYMMKPKW</sequence>
<geneLocation type="mitochondrion"/>
<gene>
    <name type="primary">MT-CYB</name>
    <name type="synonym">COB</name>
    <name type="synonym">CYTB</name>
    <name type="synonym">MTCYB</name>
</gene>
<comment type="function">
    <text evidence="2">Component of the ubiquinol-cytochrome c reductase complex (complex III or cytochrome b-c1 complex) that is part of the mitochondrial respiratory chain. The b-c1 complex mediates electron transfer from ubiquinol to cytochrome c. Contributes to the generation of a proton gradient across the mitochondrial membrane that is then used for ATP synthesis.</text>
</comment>
<comment type="cofactor">
    <cofactor evidence="2">
        <name>heme b</name>
        <dbReference type="ChEBI" id="CHEBI:60344"/>
    </cofactor>
    <text evidence="2">Binds 2 heme b groups non-covalently.</text>
</comment>
<comment type="subunit">
    <text evidence="2">The cytochrome bc1 complex contains 11 subunits: 3 respiratory subunits (MT-CYB, CYC1 and UQCRFS1), 2 core proteins (UQCRC1 and UQCRC2) and 6 low-molecular weight proteins (UQCRH/QCR6, UQCRB/QCR7, UQCRQ/QCR8, UQCR10/QCR9, UQCR11/QCR10 and a cleavage product of UQCRFS1). This cytochrome bc1 complex then forms a dimer.</text>
</comment>
<comment type="subcellular location">
    <subcellularLocation>
        <location evidence="2">Mitochondrion inner membrane</location>
        <topology evidence="2">Multi-pass membrane protein</topology>
    </subcellularLocation>
</comment>
<comment type="miscellaneous">
    <text evidence="1">Heme 1 (or BL or b562) is low-potential and absorbs at about 562 nm, and heme 2 (or BH or b566) is high-potential and absorbs at about 566 nm.</text>
</comment>
<comment type="similarity">
    <text evidence="3 4">Belongs to the cytochrome b family.</text>
</comment>
<comment type="caution">
    <text evidence="2">The full-length protein contains only eight transmembrane helices, not nine as predicted by bioinformatics tools.</text>
</comment>
<keyword id="KW-0249">Electron transport</keyword>
<keyword id="KW-0349">Heme</keyword>
<keyword id="KW-0408">Iron</keyword>
<keyword id="KW-0472">Membrane</keyword>
<keyword id="KW-0479">Metal-binding</keyword>
<keyword id="KW-0496">Mitochondrion</keyword>
<keyword id="KW-0999">Mitochondrion inner membrane</keyword>
<keyword id="KW-0679">Respiratory chain</keyword>
<keyword id="KW-0812">Transmembrane</keyword>
<keyword id="KW-1133">Transmembrane helix</keyword>
<keyword id="KW-0813">Transport</keyword>
<keyword id="KW-0830">Ubiquinone</keyword>
<proteinExistence type="inferred from homology"/>
<reference key="1">
    <citation type="journal article" date="1994" name="J. Mammal. Evol.">
        <title>Phylogenetic structure of the marsupial family Dasyuridae based on cytochrome-b DNA sequences.</title>
        <authorList>
            <person name="Krajewski C."/>
            <person name="Painter J."/>
            <person name="Buckley L."/>
            <person name="Westerman M."/>
        </authorList>
    </citation>
    <scope>NUCLEOTIDE SEQUENCE [GENOMIC DNA]</scope>
</reference>
<dbReference type="EMBL" id="U07584">
    <property type="protein sequence ID" value="AAB88760.1"/>
    <property type="molecule type" value="Genomic_DNA"/>
</dbReference>
<dbReference type="SMR" id="Q35038"/>
<dbReference type="GO" id="GO:0005743">
    <property type="term" value="C:mitochondrial inner membrane"/>
    <property type="evidence" value="ECO:0007669"/>
    <property type="project" value="UniProtKB-SubCell"/>
</dbReference>
<dbReference type="GO" id="GO:0045275">
    <property type="term" value="C:respiratory chain complex III"/>
    <property type="evidence" value="ECO:0007669"/>
    <property type="project" value="InterPro"/>
</dbReference>
<dbReference type="GO" id="GO:0046872">
    <property type="term" value="F:metal ion binding"/>
    <property type="evidence" value="ECO:0007669"/>
    <property type="project" value="UniProtKB-KW"/>
</dbReference>
<dbReference type="GO" id="GO:0008121">
    <property type="term" value="F:ubiquinol-cytochrome-c reductase activity"/>
    <property type="evidence" value="ECO:0007669"/>
    <property type="project" value="InterPro"/>
</dbReference>
<dbReference type="GO" id="GO:0006122">
    <property type="term" value="P:mitochondrial electron transport, ubiquinol to cytochrome c"/>
    <property type="evidence" value="ECO:0007669"/>
    <property type="project" value="TreeGrafter"/>
</dbReference>
<dbReference type="CDD" id="cd00290">
    <property type="entry name" value="cytochrome_b_C"/>
    <property type="match status" value="1"/>
</dbReference>
<dbReference type="CDD" id="cd00284">
    <property type="entry name" value="Cytochrome_b_N"/>
    <property type="match status" value="1"/>
</dbReference>
<dbReference type="FunFam" id="1.20.810.10:FF:000002">
    <property type="entry name" value="Cytochrome b"/>
    <property type="match status" value="1"/>
</dbReference>
<dbReference type="Gene3D" id="1.20.810.10">
    <property type="entry name" value="Cytochrome Bc1 Complex, Chain C"/>
    <property type="match status" value="1"/>
</dbReference>
<dbReference type="InterPro" id="IPR005798">
    <property type="entry name" value="Cyt_b/b6_C"/>
</dbReference>
<dbReference type="InterPro" id="IPR036150">
    <property type="entry name" value="Cyt_b/b6_C_sf"/>
</dbReference>
<dbReference type="InterPro" id="IPR005797">
    <property type="entry name" value="Cyt_b/b6_N"/>
</dbReference>
<dbReference type="InterPro" id="IPR027387">
    <property type="entry name" value="Cytb/b6-like_sf"/>
</dbReference>
<dbReference type="InterPro" id="IPR030689">
    <property type="entry name" value="Cytochrome_b"/>
</dbReference>
<dbReference type="InterPro" id="IPR048260">
    <property type="entry name" value="Cytochrome_b_C_euk/bac"/>
</dbReference>
<dbReference type="InterPro" id="IPR048259">
    <property type="entry name" value="Cytochrome_b_N_euk/bac"/>
</dbReference>
<dbReference type="InterPro" id="IPR016174">
    <property type="entry name" value="Di-haem_cyt_TM"/>
</dbReference>
<dbReference type="PANTHER" id="PTHR19271">
    <property type="entry name" value="CYTOCHROME B"/>
    <property type="match status" value="1"/>
</dbReference>
<dbReference type="PANTHER" id="PTHR19271:SF16">
    <property type="entry name" value="CYTOCHROME B"/>
    <property type="match status" value="1"/>
</dbReference>
<dbReference type="Pfam" id="PF00032">
    <property type="entry name" value="Cytochrom_B_C"/>
    <property type="match status" value="1"/>
</dbReference>
<dbReference type="Pfam" id="PF00033">
    <property type="entry name" value="Cytochrome_B"/>
    <property type="match status" value="1"/>
</dbReference>
<dbReference type="PIRSF" id="PIRSF038885">
    <property type="entry name" value="COB"/>
    <property type="match status" value="1"/>
</dbReference>
<dbReference type="SUPFAM" id="SSF81648">
    <property type="entry name" value="a domain/subunit of cytochrome bc1 complex (Ubiquinol-cytochrome c reductase)"/>
    <property type="match status" value="1"/>
</dbReference>
<dbReference type="SUPFAM" id="SSF81342">
    <property type="entry name" value="Transmembrane di-heme cytochromes"/>
    <property type="match status" value="1"/>
</dbReference>
<dbReference type="PROSITE" id="PS51003">
    <property type="entry name" value="CYTB_CTER"/>
    <property type="match status" value="1"/>
</dbReference>
<dbReference type="PROSITE" id="PS51002">
    <property type="entry name" value="CYTB_NTER"/>
    <property type="match status" value="1"/>
</dbReference>
<accession>Q35038</accession>